<proteinExistence type="inferred from homology"/>
<keyword id="KW-0030">Aminoacyl-tRNA synthetase</keyword>
<keyword id="KW-0067">ATP-binding</keyword>
<keyword id="KW-0963">Cytoplasm</keyword>
<keyword id="KW-0436">Ligase</keyword>
<keyword id="KW-0547">Nucleotide-binding</keyword>
<keyword id="KW-0648">Protein biosynthesis</keyword>
<keyword id="KW-1185">Reference proteome</keyword>
<name>SYGB_DESAL</name>
<protein>
    <recommendedName>
        <fullName evidence="1">Glycine--tRNA ligase beta subunit</fullName>
        <ecNumber evidence="1">6.1.1.14</ecNumber>
    </recommendedName>
    <alternativeName>
        <fullName evidence="1">Glycyl-tRNA synthetase beta subunit</fullName>
        <shortName evidence="1">GlyRS</shortName>
    </alternativeName>
</protein>
<accession>B8FKD8</accession>
<sequence length="690" mass="75448">MQPLLLEIGSEEIPAGYIVPALEALAQALDAKLESARIAHSKPKVYGTPRRLAVILDEVAEKQESVTTEMVGPPKSVAFDGEGKPKVPAVKFAEKAGVAVEELTFQETEKGVYLCAKIQDEGKETLGILQEMLPEIISHIPFPKSMRWAALPGTFARPVFSILALLGDQVIPFEWNGVTTGRQTRGHYFMAPEAIDIQTPSEYVNALEKAKVIADIPTRRKMVKEGVDAIAKELGGDAIEDEELVDIVANLVEFPAPVGGKFETGFLEVPDKVLITAMREHQKYFAIQDKDGKLMPCFVAVNNTQCKDPQLVATGHERVLRARLSDAKFFWDVDKKQSMEDWVKRLDRVLFQKKLGSVGEKVARVEEMAKFLAAAPEINGDPDKAQKAAHFCKADLVSGLVIEFTKLQGVMGKAYASLAGMDAETASALEEHYLPAYSGGPLPRTKTGDAVAMADKMDSLCGCFAVGLIPSGNRDPYALRRQGIGVIRILQEKGYSLSLSAIVDKGLTLVKDKADQNLAETRDKIISFLADRMAHMLAEQGFSKDVIQAAVAISCDDIPYLWKRVAAVEKLKTLPDYEALAQTFKRVANIIKQAAEKGTLSDQEVNPALFEKDCEKDLLEAFTAMEAKVSGLGVDEALLEVAKLRPAVDAFFDDVMVMAEDMKVRENRLALLAGIAGLFGRFADFSRISA</sequence>
<gene>
    <name evidence="1" type="primary">glyS</name>
    <name type="ordered locus">Dalk_0043</name>
</gene>
<organism>
    <name type="scientific">Desulfatibacillum aliphaticivorans</name>
    <dbReference type="NCBI Taxonomy" id="218208"/>
    <lineage>
        <taxon>Bacteria</taxon>
        <taxon>Pseudomonadati</taxon>
        <taxon>Thermodesulfobacteriota</taxon>
        <taxon>Desulfobacteria</taxon>
        <taxon>Desulfobacterales</taxon>
        <taxon>Desulfatibacillaceae</taxon>
        <taxon>Desulfatibacillum</taxon>
    </lineage>
</organism>
<reference key="1">
    <citation type="journal article" date="2012" name="Environ. Microbiol.">
        <title>The genome sequence of Desulfatibacillum alkenivorans AK-01: a blueprint for anaerobic alkane oxidation.</title>
        <authorList>
            <person name="Callaghan A.V."/>
            <person name="Morris B.E."/>
            <person name="Pereira I.A."/>
            <person name="McInerney M.J."/>
            <person name="Austin R.N."/>
            <person name="Groves J.T."/>
            <person name="Kukor J.J."/>
            <person name="Suflita J.M."/>
            <person name="Young L.Y."/>
            <person name="Zylstra G.J."/>
            <person name="Wawrik B."/>
        </authorList>
    </citation>
    <scope>NUCLEOTIDE SEQUENCE [LARGE SCALE GENOMIC DNA]</scope>
    <source>
        <strain>AK-01</strain>
    </source>
</reference>
<feature type="chain" id="PRO_1000204600" description="Glycine--tRNA ligase beta subunit">
    <location>
        <begin position="1"/>
        <end position="690"/>
    </location>
</feature>
<comment type="catalytic activity">
    <reaction evidence="1">
        <text>tRNA(Gly) + glycine + ATP = glycyl-tRNA(Gly) + AMP + diphosphate</text>
        <dbReference type="Rhea" id="RHEA:16013"/>
        <dbReference type="Rhea" id="RHEA-COMP:9664"/>
        <dbReference type="Rhea" id="RHEA-COMP:9683"/>
        <dbReference type="ChEBI" id="CHEBI:30616"/>
        <dbReference type="ChEBI" id="CHEBI:33019"/>
        <dbReference type="ChEBI" id="CHEBI:57305"/>
        <dbReference type="ChEBI" id="CHEBI:78442"/>
        <dbReference type="ChEBI" id="CHEBI:78522"/>
        <dbReference type="ChEBI" id="CHEBI:456215"/>
        <dbReference type="EC" id="6.1.1.14"/>
    </reaction>
</comment>
<comment type="subunit">
    <text evidence="1">Tetramer of two alpha and two beta subunits.</text>
</comment>
<comment type="subcellular location">
    <subcellularLocation>
        <location evidence="1">Cytoplasm</location>
    </subcellularLocation>
</comment>
<comment type="similarity">
    <text evidence="1">Belongs to the class-II aminoacyl-tRNA synthetase family.</text>
</comment>
<dbReference type="EC" id="6.1.1.14" evidence="1"/>
<dbReference type="EMBL" id="CP001322">
    <property type="protein sequence ID" value="ACL01753.1"/>
    <property type="molecule type" value="Genomic_DNA"/>
</dbReference>
<dbReference type="RefSeq" id="WP_012609193.1">
    <property type="nucleotide sequence ID" value="NC_011768.1"/>
</dbReference>
<dbReference type="SMR" id="B8FKD8"/>
<dbReference type="KEGG" id="dal:Dalk_0043"/>
<dbReference type="eggNOG" id="COG0751">
    <property type="taxonomic scope" value="Bacteria"/>
</dbReference>
<dbReference type="HOGENOM" id="CLU_007220_2_2_7"/>
<dbReference type="Proteomes" id="UP000000739">
    <property type="component" value="Chromosome"/>
</dbReference>
<dbReference type="GO" id="GO:0005829">
    <property type="term" value="C:cytosol"/>
    <property type="evidence" value="ECO:0007669"/>
    <property type="project" value="TreeGrafter"/>
</dbReference>
<dbReference type="GO" id="GO:0004814">
    <property type="term" value="F:arginine-tRNA ligase activity"/>
    <property type="evidence" value="ECO:0007669"/>
    <property type="project" value="InterPro"/>
</dbReference>
<dbReference type="GO" id="GO:0005524">
    <property type="term" value="F:ATP binding"/>
    <property type="evidence" value="ECO:0007669"/>
    <property type="project" value="UniProtKB-UniRule"/>
</dbReference>
<dbReference type="GO" id="GO:0004820">
    <property type="term" value="F:glycine-tRNA ligase activity"/>
    <property type="evidence" value="ECO:0007669"/>
    <property type="project" value="UniProtKB-UniRule"/>
</dbReference>
<dbReference type="GO" id="GO:0006420">
    <property type="term" value="P:arginyl-tRNA aminoacylation"/>
    <property type="evidence" value="ECO:0007669"/>
    <property type="project" value="InterPro"/>
</dbReference>
<dbReference type="GO" id="GO:0006426">
    <property type="term" value="P:glycyl-tRNA aminoacylation"/>
    <property type="evidence" value="ECO:0007669"/>
    <property type="project" value="UniProtKB-UniRule"/>
</dbReference>
<dbReference type="HAMAP" id="MF_00255">
    <property type="entry name" value="Gly_tRNA_synth_beta"/>
    <property type="match status" value="1"/>
</dbReference>
<dbReference type="InterPro" id="IPR008909">
    <property type="entry name" value="DALR_anticod-bd"/>
</dbReference>
<dbReference type="InterPro" id="IPR015944">
    <property type="entry name" value="Gly-tRNA-synth_bsu"/>
</dbReference>
<dbReference type="InterPro" id="IPR006194">
    <property type="entry name" value="Gly-tRNA-synth_heterodimer"/>
</dbReference>
<dbReference type="NCBIfam" id="TIGR00211">
    <property type="entry name" value="glyS"/>
    <property type="match status" value="1"/>
</dbReference>
<dbReference type="PANTHER" id="PTHR30075:SF2">
    <property type="entry name" value="GLYCINE--TRNA LIGASE, CHLOROPLASTIC_MITOCHONDRIAL 2"/>
    <property type="match status" value="1"/>
</dbReference>
<dbReference type="PANTHER" id="PTHR30075">
    <property type="entry name" value="GLYCYL-TRNA SYNTHETASE"/>
    <property type="match status" value="1"/>
</dbReference>
<dbReference type="Pfam" id="PF05746">
    <property type="entry name" value="DALR_1"/>
    <property type="match status" value="1"/>
</dbReference>
<dbReference type="Pfam" id="PF02092">
    <property type="entry name" value="tRNA_synt_2f"/>
    <property type="match status" value="1"/>
</dbReference>
<dbReference type="PRINTS" id="PR01045">
    <property type="entry name" value="TRNASYNTHGB"/>
</dbReference>
<dbReference type="SUPFAM" id="SSF109604">
    <property type="entry name" value="HD-domain/PDEase-like"/>
    <property type="match status" value="1"/>
</dbReference>
<dbReference type="PROSITE" id="PS50861">
    <property type="entry name" value="AA_TRNA_LIGASE_II_GLYAB"/>
    <property type="match status" value="1"/>
</dbReference>
<evidence type="ECO:0000255" key="1">
    <source>
        <dbReference type="HAMAP-Rule" id="MF_00255"/>
    </source>
</evidence>